<gene>
    <name type="primary">mnhC2</name>
    <name type="synonym">mrpC2</name>
    <name type="ordered locus">SAS0591</name>
</gene>
<feature type="chain" id="PRO_0000372253" description="Putative antiporter subunit mnhC2">
    <location>
        <begin position="1"/>
        <end position="114"/>
    </location>
</feature>
<feature type="transmembrane region" description="Helical" evidence="2">
    <location>
        <begin position="3"/>
        <end position="23"/>
    </location>
</feature>
<feature type="transmembrane region" description="Helical" evidence="2">
    <location>
        <begin position="28"/>
        <end position="48"/>
    </location>
</feature>
<feature type="transmembrane region" description="Helical" evidence="2">
    <location>
        <begin position="72"/>
        <end position="92"/>
    </location>
</feature>
<protein>
    <recommendedName>
        <fullName>Putative antiporter subunit mnhC2</fullName>
    </recommendedName>
    <alternativeName>
        <fullName>Mrp complex subunit C2</fullName>
    </alternativeName>
    <alternativeName>
        <fullName>Putative NADH-ubiquinone oxidoreductase subunit mnhC2</fullName>
    </alternativeName>
</protein>
<sequence length="114" mass="12496">MNLILLLVIGFLVFIGTYMILSINLIRIVIGISIYTHAGNLIIMSMGTYGSSRSEPLITGGNQLFVDPLLQAIVLTAIVIGFGMTAFLLVLVYRTYKVTKEDEIEGLRGEDDAK</sequence>
<organism>
    <name type="scientific">Staphylococcus aureus (strain MSSA476)</name>
    <dbReference type="NCBI Taxonomy" id="282459"/>
    <lineage>
        <taxon>Bacteria</taxon>
        <taxon>Bacillati</taxon>
        <taxon>Bacillota</taxon>
        <taxon>Bacilli</taxon>
        <taxon>Bacillales</taxon>
        <taxon>Staphylococcaceae</taxon>
        <taxon>Staphylococcus</taxon>
    </lineage>
</organism>
<keyword id="KW-0050">Antiport</keyword>
<keyword id="KW-1003">Cell membrane</keyword>
<keyword id="KW-0406">Ion transport</keyword>
<keyword id="KW-0472">Membrane</keyword>
<keyword id="KW-0812">Transmembrane</keyword>
<keyword id="KW-1133">Transmembrane helix</keyword>
<keyword id="KW-0813">Transport</keyword>
<evidence type="ECO:0000250" key="1"/>
<evidence type="ECO:0000255" key="2"/>
<evidence type="ECO:0000305" key="3"/>
<reference key="1">
    <citation type="journal article" date="2004" name="Proc. Natl. Acad. Sci. U.S.A.">
        <title>Complete genomes of two clinical Staphylococcus aureus strains: evidence for the rapid evolution of virulence and drug resistance.</title>
        <authorList>
            <person name="Holden M.T.G."/>
            <person name="Feil E.J."/>
            <person name="Lindsay J.A."/>
            <person name="Peacock S.J."/>
            <person name="Day N.P.J."/>
            <person name="Enright M.C."/>
            <person name="Foster T.J."/>
            <person name="Moore C.E."/>
            <person name="Hurst L."/>
            <person name="Atkin R."/>
            <person name="Barron A."/>
            <person name="Bason N."/>
            <person name="Bentley S.D."/>
            <person name="Chillingworth C."/>
            <person name="Chillingworth T."/>
            <person name="Churcher C."/>
            <person name="Clark L."/>
            <person name="Corton C."/>
            <person name="Cronin A."/>
            <person name="Doggett J."/>
            <person name="Dowd L."/>
            <person name="Feltwell T."/>
            <person name="Hance Z."/>
            <person name="Harris B."/>
            <person name="Hauser H."/>
            <person name="Holroyd S."/>
            <person name="Jagels K."/>
            <person name="James K.D."/>
            <person name="Lennard N."/>
            <person name="Line A."/>
            <person name="Mayes R."/>
            <person name="Moule S."/>
            <person name="Mungall K."/>
            <person name="Ormond D."/>
            <person name="Quail M.A."/>
            <person name="Rabbinowitsch E."/>
            <person name="Rutherford K.M."/>
            <person name="Sanders M."/>
            <person name="Sharp S."/>
            <person name="Simmonds M."/>
            <person name="Stevens K."/>
            <person name="Whitehead S."/>
            <person name="Barrell B.G."/>
            <person name="Spratt B.G."/>
            <person name="Parkhill J."/>
        </authorList>
    </citation>
    <scope>NUCLEOTIDE SEQUENCE [LARGE SCALE GENOMIC DNA]</scope>
    <source>
        <strain>MSSA476</strain>
    </source>
</reference>
<comment type="subunit">
    <text evidence="1">May form a heterooligomeric complex that consists of seven subunits: mnhA2, mnhB2, mnhC2, mnhD2, mnhE2, mnhF2 and mnhG2.</text>
</comment>
<comment type="subcellular location">
    <subcellularLocation>
        <location evidence="3">Cell membrane</location>
        <topology evidence="3">Multi-pass membrane protein</topology>
    </subcellularLocation>
</comment>
<comment type="similarity">
    <text evidence="3">Belongs to the CPA3 antiporters (TC 2.A.63) subunit C family.</text>
</comment>
<proteinExistence type="inferred from homology"/>
<name>MNHC2_STAAS</name>
<accession>Q6GBK5</accession>
<dbReference type="EMBL" id="BX571857">
    <property type="protein sequence ID" value="CAG42366.1"/>
    <property type="molecule type" value="Genomic_DNA"/>
</dbReference>
<dbReference type="RefSeq" id="WP_001048985.1">
    <property type="nucleotide sequence ID" value="NC_002953.3"/>
</dbReference>
<dbReference type="SMR" id="Q6GBK5"/>
<dbReference type="KEGG" id="sas:SAS0591"/>
<dbReference type="HOGENOM" id="CLU_082058_3_1_9"/>
<dbReference type="GO" id="GO:0005886">
    <property type="term" value="C:plasma membrane"/>
    <property type="evidence" value="ECO:0007669"/>
    <property type="project" value="UniProtKB-SubCell"/>
</dbReference>
<dbReference type="GO" id="GO:0015297">
    <property type="term" value="F:antiporter activity"/>
    <property type="evidence" value="ECO:0007669"/>
    <property type="project" value="UniProtKB-KW"/>
</dbReference>
<dbReference type="GO" id="GO:0006811">
    <property type="term" value="P:monoatomic ion transport"/>
    <property type="evidence" value="ECO:0007669"/>
    <property type="project" value="UniProtKB-KW"/>
</dbReference>
<dbReference type="Gene3D" id="1.10.287.3510">
    <property type="match status" value="1"/>
</dbReference>
<dbReference type="InterPro" id="IPR050601">
    <property type="entry name" value="CPA3_antiporter_subunitC"/>
</dbReference>
<dbReference type="InterPro" id="IPR039428">
    <property type="entry name" value="NUOK/Mnh_C1-like"/>
</dbReference>
<dbReference type="NCBIfam" id="NF009303">
    <property type="entry name" value="PRK12660.1"/>
    <property type="match status" value="1"/>
</dbReference>
<dbReference type="PANTHER" id="PTHR34583">
    <property type="entry name" value="ANTIPORTER SUBUNIT MNHC2-RELATED"/>
    <property type="match status" value="1"/>
</dbReference>
<dbReference type="PANTHER" id="PTHR34583:SF2">
    <property type="entry name" value="ANTIPORTER SUBUNIT MNHC2-RELATED"/>
    <property type="match status" value="1"/>
</dbReference>
<dbReference type="Pfam" id="PF00420">
    <property type="entry name" value="Oxidored_q2"/>
    <property type="match status" value="1"/>
</dbReference>